<sequence>MARKGLIQRERKRQKLEQKYHLIRRSPKKEIGKVSSLSDKWKIHGKLQSPPRNSAPTRLHRRCFLTGRPRANYRDFGLSGHILREKVHACLLPGATRSSW</sequence>
<reference key="1">
    <citation type="journal article" date="2003" name="Plant Syst. Evol.">
        <title>The chloroplast genome of the 'basal' angiosperm Calycanthus fertilis -- structural and phylogenetic analyses.</title>
        <authorList>
            <person name="Goremykin V."/>
            <person name="Hirsch-Ernst K.I."/>
            <person name="Woelfl S."/>
            <person name="Hellwig F.H."/>
        </authorList>
    </citation>
    <scope>NUCLEOTIDE SEQUENCE [LARGE SCALE GENOMIC DNA]</scope>
</reference>
<protein>
    <recommendedName>
        <fullName evidence="1">Small ribosomal subunit protein uS14c</fullName>
    </recommendedName>
    <alternativeName>
        <fullName evidence="2">30S ribosomal protein S14, chloroplastic</fullName>
    </alternativeName>
</protein>
<geneLocation type="chloroplast"/>
<dbReference type="EMBL" id="AJ428413">
    <property type="protein sequence ID" value="CAD28719.1"/>
    <property type="molecule type" value="Genomic_DNA"/>
</dbReference>
<dbReference type="RefSeq" id="NP_862752.1">
    <property type="nucleotide sequence ID" value="NC_004993.1"/>
</dbReference>
<dbReference type="SMR" id="Q7YJX4"/>
<dbReference type="GeneID" id="2598038"/>
<dbReference type="GO" id="GO:0009507">
    <property type="term" value="C:chloroplast"/>
    <property type="evidence" value="ECO:0007669"/>
    <property type="project" value="UniProtKB-SubCell"/>
</dbReference>
<dbReference type="GO" id="GO:0015935">
    <property type="term" value="C:small ribosomal subunit"/>
    <property type="evidence" value="ECO:0007669"/>
    <property type="project" value="TreeGrafter"/>
</dbReference>
<dbReference type="GO" id="GO:0019843">
    <property type="term" value="F:rRNA binding"/>
    <property type="evidence" value="ECO:0007669"/>
    <property type="project" value="UniProtKB-UniRule"/>
</dbReference>
<dbReference type="GO" id="GO:0003735">
    <property type="term" value="F:structural constituent of ribosome"/>
    <property type="evidence" value="ECO:0007669"/>
    <property type="project" value="InterPro"/>
</dbReference>
<dbReference type="GO" id="GO:0006412">
    <property type="term" value="P:translation"/>
    <property type="evidence" value="ECO:0007669"/>
    <property type="project" value="UniProtKB-UniRule"/>
</dbReference>
<dbReference type="FunFam" id="1.10.287.1480:FF:000001">
    <property type="entry name" value="30S ribosomal protein S14"/>
    <property type="match status" value="1"/>
</dbReference>
<dbReference type="Gene3D" id="1.10.287.1480">
    <property type="match status" value="1"/>
</dbReference>
<dbReference type="HAMAP" id="MF_00537">
    <property type="entry name" value="Ribosomal_uS14_1"/>
    <property type="match status" value="1"/>
</dbReference>
<dbReference type="InterPro" id="IPR001209">
    <property type="entry name" value="Ribosomal_uS14"/>
</dbReference>
<dbReference type="InterPro" id="IPR023036">
    <property type="entry name" value="Ribosomal_uS14_bac/plastid"/>
</dbReference>
<dbReference type="InterPro" id="IPR018271">
    <property type="entry name" value="Ribosomal_uS14_CS"/>
</dbReference>
<dbReference type="NCBIfam" id="NF006477">
    <property type="entry name" value="PRK08881.1"/>
    <property type="match status" value="1"/>
</dbReference>
<dbReference type="PANTHER" id="PTHR19836">
    <property type="entry name" value="30S RIBOSOMAL PROTEIN S14"/>
    <property type="match status" value="1"/>
</dbReference>
<dbReference type="PANTHER" id="PTHR19836:SF19">
    <property type="entry name" value="SMALL RIBOSOMAL SUBUNIT PROTEIN US14M"/>
    <property type="match status" value="1"/>
</dbReference>
<dbReference type="Pfam" id="PF00253">
    <property type="entry name" value="Ribosomal_S14"/>
    <property type="match status" value="1"/>
</dbReference>
<dbReference type="SUPFAM" id="SSF57716">
    <property type="entry name" value="Glucocorticoid receptor-like (DNA-binding domain)"/>
    <property type="match status" value="1"/>
</dbReference>
<dbReference type="PROSITE" id="PS00527">
    <property type="entry name" value="RIBOSOMAL_S14"/>
    <property type="match status" value="1"/>
</dbReference>
<proteinExistence type="inferred from homology"/>
<name>RR14_CALFG</name>
<evidence type="ECO:0000255" key="1">
    <source>
        <dbReference type="HAMAP-Rule" id="MF_00537"/>
    </source>
</evidence>
<evidence type="ECO:0000305" key="2"/>
<accession>Q7YJX4</accession>
<keyword id="KW-0150">Chloroplast</keyword>
<keyword id="KW-0934">Plastid</keyword>
<keyword id="KW-0687">Ribonucleoprotein</keyword>
<keyword id="KW-0689">Ribosomal protein</keyword>
<keyword id="KW-0694">RNA-binding</keyword>
<keyword id="KW-0699">rRNA-binding</keyword>
<organism>
    <name type="scientific">Calycanthus floridus var. glaucus</name>
    <name type="common">Eastern sweetshrub</name>
    <name type="synonym">Calycanthus fertilis var. ferax</name>
    <dbReference type="NCBI Taxonomy" id="212734"/>
    <lineage>
        <taxon>Eukaryota</taxon>
        <taxon>Viridiplantae</taxon>
        <taxon>Streptophyta</taxon>
        <taxon>Embryophyta</taxon>
        <taxon>Tracheophyta</taxon>
        <taxon>Spermatophyta</taxon>
        <taxon>Magnoliopsida</taxon>
        <taxon>Magnoliidae</taxon>
        <taxon>Laurales</taxon>
        <taxon>Calycanthaceae</taxon>
        <taxon>Calycanthus</taxon>
    </lineage>
</organism>
<gene>
    <name evidence="1" type="primary">rps14</name>
</gene>
<feature type="chain" id="PRO_0000276668" description="Small ribosomal subunit protein uS14c">
    <location>
        <begin position="1"/>
        <end position="100"/>
    </location>
</feature>
<comment type="function">
    <text evidence="1">Binds 16S rRNA, required for the assembly of 30S particles.</text>
</comment>
<comment type="subunit">
    <text evidence="1">Part of the 30S ribosomal subunit.</text>
</comment>
<comment type="subcellular location">
    <subcellularLocation>
        <location>Plastid</location>
        <location>Chloroplast</location>
    </subcellularLocation>
</comment>
<comment type="similarity">
    <text evidence="1">Belongs to the universal ribosomal protein uS14 family.</text>
</comment>